<name>AMPA_CITK8</name>
<protein>
    <recommendedName>
        <fullName evidence="1">Probable cytosol aminopeptidase</fullName>
        <ecNumber evidence="1">3.4.11.1</ecNumber>
    </recommendedName>
    <alternativeName>
        <fullName evidence="1">Leucine aminopeptidase</fullName>
        <shortName evidence="1">LAP</shortName>
        <ecNumber evidence="1">3.4.11.10</ecNumber>
    </alternativeName>
    <alternativeName>
        <fullName evidence="1">Leucyl aminopeptidase</fullName>
    </alternativeName>
</protein>
<evidence type="ECO:0000255" key="1">
    <source>
        <dbReference type="HAMAP-Rule" id="MF_00181"/>
    </source>
</evidence>
<sequence>MEFSVKSGSPEKQRSACIVVGVFEPRRLSPIAEQLDKISDGYISALLRRGELEGKPGQTLLLHHVPNVLSERILLIGCGKERELDERQYKQVIQKTINTLNDTGSMEAVCFLTELHVKGRNNYWKVRQAVETAKETLYSFDQLKTNKSEPRRPLRKMVFNVPTRRELTSGERAIQHGLAIAAGIKAAKDLGNMPPNICNAAYLASQARQLADSYSKNVITRVIGEQQMKELGMHSYLAVGHGSQNESLMSVIEYKGNPSEDARPVVLVGKGLTFDSGGISIKPAEGMDEMKYDMCGAAAVYGVMRMVAELQLPINVIGVLAGCENMPGGRAYRPGDVLTTMSGQTVEVLNTDAEGRLVLCDVLTYVERFEPEAVIDVATLTGACVIALGHHITGLMSNHNPLAHELISASEQAGDRAWRLPLGDEFQEQLESNFADIANIGGRPGGAITAGCFLSRFTRKYNWAHLDIAGTAWRSGKAKGATGRPVALLSQFLLNRAGFNGEE</sequence>
<feature type="chain" id="PRO_1000019908" description="Probable cytosol aminopeptidase">
    <location>
        <begin position="1"/>
        <end position="503"/>
    </location>
</feature>
<feature type="active site" evidence="1">
    <location>
        <position position="282"/>
    </location>
</feature>
<feature type="active site" evidence="1">
    <location>
        <position position="356"/>
    </location>
</feature>
<feature type="binding site" evidence="1">
    <location>
        <position position="270"/>
    </location>
    <ligand>
        <name>Mn(2+)</name>
        <dbReference type="ChEBI" id="CHEBI:29035"/>
        <label>2</label>
    </ligand>
</feature>
<feature type="binding site" evidence="1">
    <location>
        <position position="275"/>
    </location>
    <ligand>
        <name>Mn(2+)</name>
        <dbReference type="ChEBI" id="CHEBI:29035"/>
        <label>1</label>
    </ligand>
</feature>
<feature type="binding site" evidence="1">
    <location>
        <position position="275"/>
    </location>
    <ligand>
        <name>Mn(2+)</name>
        <dbReference type="ChEBI" id="CHEBI:29035"/>
        <label>2</label>
    </ligand>
</feature>
<feature type="binding site" evidence="1">
    <location>
        <position position="293"/>
    </location>
    <ligand>
        <name>Mn(2+)</name>
        <dbReference type="ChEBI" id="CHEBI:29035"/>
        <label>2</label>
    </ligand>
</feature>
<feature type="binding site" evidence="1">
    <location>
        <position position="352"/>
    </location>
    <ligand>
        <name>Mn(2+)</name>
        <dbReference type="ChEBI" id="CHEBI:29035"/>
        <label>1</label>
    </ligand>
</feature>
<feature type="binding site" evidence="1">
    <location>
        <position position="354"/>
    </location>
    <ligand>
        <name>Mn(2+)</name>
        <dbReference type="ChEBI" id="CHEBI:29035"/>
        <label>1</label>
    </ligand>
</feature>
<feature type="binding site" evidence="1">
    <location>
        <position position="354"/>
    </location>
    <ligand>
        <name>Mn(2+)</name>
        <dbReference type="ChEBI" id="CHEBI:29035"/>
        <label>2</label>
    </ligand>
</feature>
<proteinExistence type="inferred from homology"/>
<gene>
    <name evidence="1" type="primary">pepA</name>
    <name type="ordered locus">CKO_03539</name>
</gene>
<comment type="function">
    <text evidence="1">Presumably involved in the processing and regular turnover of intracellular proteins. Catalyzes the removal of unsubstituted N-terminal amino acids from various peptides.</text>
</comment>
<comment type="catalytic activity">
    <reaction evidence="1">
        <text>Release of an N-terminal amino acid, Xaa-|-Yaa-, in which Xaa is preferably Leu, but may be other amino acids including Pro although not Arg or Lys, and Yaa may be Pro. Amino acid amides and methyl esters are also readily hydrolyzed, but rates on arylamides are exceedingly low.</text>
        <dbReference type="EC" id="3.4.11.1"/>
    </reaction>
</comment>
<comment type="catalytic activity">
    <reaction evidence="1">
        <text>Release of an N-terminal amino acid, preferentially leucine, but not glutamic or aspartic acids.</text>
        <dbReference type="EC" id="3.4.11.10"/>
    </reaction>
</comment>
<comment type="cofactor">
    <cofactor evidence="1">
        <name>Mn(2+)</name>
        <dbReference type="ChEBI" id="CHEBI:29035"/>
    </cofactor>
    <text evidence="1">Binds 2 manganese ions per subunit.</text>
</comment>
<comment type="subcellular location">
    <subcellularLocation>
        <location evidence="1">Cytoplasm</location>
    </subcellularLocation>
</comment>
<comment type="similarity">
    <text evidence="1">Belongs to the peptidase M17 family.</text>
</comment>
<dbReference type="EC" id="3.4.11.1" evidence="1"/>
<dbReference type="EC" id="3.4.11.10" evidence="1"/>
<dbReference type="EMBL" id="CP000822">
    <property type="protein sequence ID" value="ABV14618.1"/>
    <property type="molecule type" value="Genomic_DNA"/>
</dbReference>
<dbReference type="RefSeq" id="WP_012134317.1">
    <property type="nucleotide sequence ID" value="NC_009792.1"/>
</dbReference>
<dbReference type="SMR" id="A8AMA5"/>
<dbReference type="STRING" id="290338.CKO_03539"/>
<dbReference type="MEROPS" id="M17.003"/>
<dbReference type="GeneID" id="45137267"/>
<dbReference type="KEGG" id="cko:CKO_03539"/>
<dbReference type="HOGENOM" id="CLU_013734_2_2_6"/>
<dbReference type="OrthoDB" id="9809354at2"/>
<dbReference type="Proteomes" id="UP000008148">
    <property type="component" value="Chromosome"/>
</dbReference>
<dbReference type="GO" id="GO:0005737">
    <property type="term" value="C:cytoplasm"/>
    <property type="evidence" value="ECO:0007669"/>
    <property type="project" value="UniProtKB-SubCell"/>
</dbReference>
<dbReference type="GO" id="GO:0030145">
    <property type="term" value="F:manganese ion binding"/>
    <property type="evidence" value="ECO:0007669"/>
    <property type="project" value="UniProtKB-UniRule"/>
</dbReference>
<dbReference type="GO" id="GO:0070006">
    <property type="term" value="F:metalloaminopeptidase activity"/>
    <property type="evidence" value="ECO:0007669"/>
    <property type="project" value="InterPro"/>
</dbReference>
<dbReference type="GO" id="GO:0006508">
    <property type="term" value="P:proteolysis"/>
    <property type="evidence" value="ECO:0007669"/>
    <property type="project" value="UniProtKB-KW"/>
</dbReference>
<dbReference type="CDD" id="cd00433">
    <property type="entry name" value="Peptidase_M17"/>
    <property type="match status" value="1"/>
</dbReference>
<dbReference type="FunFam" id="3.40.220.10:FF:000001">
    <property type="entry name" value="Probable cytosol aminopeptidase"/>
    <property type="match status" value="1"/>
</dbReference>
<dbReference type="FunFam" id="3.40.630.10:FF:000004">
    <property type="entry name" value="Probable cytosol aminopeptidase"/>
    <property type="match status" value="1"/>
</dbReference>
<dbReference type="Gene3D" id="3.40.220.10">
    <property type="entry name" value="Leucine Aminopeptidase, subunit E, domain 1"/>
    <property type="match status" value="1"/>
</dbReference>
<dbReference type="Gene3D" id="3.40.630.10">
    <property type="entry name" value="Zn peptidases"/>
    <property type="match status" value="1"/>
</dbReference>
<dbReference type="HAMAP" id="MF_00181">
    <property type="entry name" value="Cytosol_peptidase_M17"/>
    <property type="match status" value="1"/>
</dbReference>
<dbReference type="InterPro" id="IPR011356">
    <property type="entry name" value="Leucine_aapep/pepB"/>
</dbReference>
<dbReference type="InterPro" id="IPR043472">
    <property type="entry name" value="Macro_dom-like"/>
</dbReference>
<dbReference type="InterPro" id="IPR000819">
    <property type="entry name" value="Peptidase_M17_C"/>
</dbReference>
<dbReference type="InterPro" id="IPR023042">
    <property type="entry name" value="Peptidase_M17_leu_NH2_pept"/>
</dbReference>
<dbReference type="InterPro" id="IPR008283">
    <property type="entry name" value="Peptidase_M17_N"/>
</dbReference>
<dbReference type="NCBIfam" id="NF002072">
    <property type="entry name" value="PRK00913.1-1"/>
    <property type="match status" value="1"/>
</dbReference>
<dbReference type="NCBIfam" id="NF002073">
    <property type="entry name" value="PRK00913.1-2"/>
    <property type="match status" value="1"/>
</dbReference>
<dbReference type="NCBIfam" id="NF002074">
    <property type="entry name" value="PRK00913.1-4"/>
    <property type="match status" value="1"/>
</dbReference>
<dbReference type="PANTHER" id="PTHR11963:SF23">
    <property type="entry name" value="CYTOSOL AMINOPEPTIDASE"/>
    <property type="match status" value="1"/>
</dbReference>
<dbReference type="PANTHER" id="PTHR11963">
    <property type="entry name" value="LEUCINE AMINOPEPTIDASE-RELATED"/>
    <property type="match status" value="1"/>
</dbReference>
<dbReference type="Pfam" id="PF00883">
    <property type="entry name" value="Peptidase_M17"/>
    <property type="match status" value="1"/>
</dbReference>
<dbReference type="Pfam" id="PF02789">
    <property type="entry name" value="Peptidase_M17_N"/>
    <property type="match status" value="1"/>
</dbReference>
<dbReference type="PRINTS" id="PR00481">
    <property type="entry name" value="LAMNOPPTDASE"/>
</dbReference>
<dbReference type="SUPFAM" id="SSF52949">
    <property type="entry name" value="Macro domain-like"/>
    <property type="match status" value="1"/>
</dbReference>
<dbReference type="SUPFAM" id="SSF53187">
    <property type="entry name" value="Zn-dependent exopeptidases"/>
    <property type="match status" value="1"/>
</dbReference>
<dbReference type="PROSITE" id="PS00631">
    <property type="entry name" value="CYTOSOL_AP"/>
    <property type="match status" value="1"/>
</dbReference>
<organism>
    <name type="scientific">Citrobacter koseri (strain ATCC BAA-895 / CDC 4225-83 / SGSC4696)</name>
    <dbReference type="NCBI Taxonomy" id="290338"/>
    <lineage>
        <taxon>Bacteria</taxon>
        <taxon>Pseudomonadati</taxon>
        <taxon>Pseudomonadota</taxon>
        <taxon>Gammaproteobacteria</taxon>
        <taxon>Enterobacterales</taxon>
        <taxon>Enterobacteriaceae</taxon>
        <taxon>Citrobacter</taxon>
    </lineage>
</organism>
<reference key="1">
    <citation type="submission" date="2007-08" db="EMBL/GenBank/DDBJ databases">
        <authorList>
            <consortium name="The Citrobacter koseri Genome Sequencing Project"/>
            <person name="McClelland M."/>
            <person name="Sanderson E.K."/>
            <person name="Porwollik S."/>
            <person name="Spieth J."/>
            <person name="Clifton W.S."/>
            <person name="Latreille P."/>
            <person name="Courtney L."/>
            <person name="Wang C."/>
            <person name="Pepin K."/>
            <person name="Bhonagiri V."/>
            <person name="Nash W."/>
            <person name="Johnson M."/>
            <person name="Thiruvilangam P."/>
            <person name="Wilson R."/>
        </authorList>
    </citation>
    <scope>NUCLEOTIDE SEQUENCE [LARGE SCALE GENOMIC DNA]</scope>
    <source>
        <strain>ATCC BAA-895 / CDC 4225-83 / SGSC4696</strain>
    </source>
</reference>
<accession>A8AMA5</accession>
<keyword id="KW-0031">Aminopeptidase</keyword>
<keyword id="KW-0963">Cytoplasm</keyword>
<keyword id="KW-0378">Hydrolase</keyword>
<keyword id="KW-0464">Manganese</keyword>
<keyword id="KW-0479">Metal-binding</keyword>
<keyword id="KW-0645">Protease</keyword>
<keyword id="KW-1185">Reference proteome</keyword>